<sequence>MTLSFTARWRDELPATYTALLPTPLKNARLIWYNDKLAQQLAIPASLFDATNGAGVWGGETLLPGMSPVAQVYSGHQFGVWAGQLGDGRGILLGEQLLADGSTLDWHLKGAGLTPYSRMGDGRAVLRSTIRESLASEAMHYLGIPTTRALSIVASDTPVQRETQETGAMLMRLAQSHMRFGHFEHFYYRREPEKVQQLADFAIRHYWPQWQDVPEKYALWFEEVAARTGRLIAEWQTVGFSHGVMNTDNMSILGLTIDYGPFGFFDDYDPGFIGNHSDHQGRYRFDNQPSVALWNLQRLAQTLTPFIEIDALNRALDRYQDALLTHYGQRMRQKLGFFTEQKDDNALLNELFSLMAREGSDYTRTFRMLSHTEQQSASSPLRDTFIDRAAFDAWFDRYRARLRTEAVDDALRQQQMQRVNPAIVLRNWLAQRAIDAAEQGDMAELHRLHEVLRQPFTDRDDDYASRPPEWGKRLEVSCSS</sequence>
<comment type="function">
    <text evidence="1">Nucleotidyltransferase involved in the post-translational modification of proteins. It can catalyze the addition of adenosine monophosphate (AMP) or uridine monophosphate (UMP) to a protein, resulting in modifications known as AMPylation and UMPylation.</text>
</comment>
<comment type="catalytic activity">
    <reaction evidence="1">
        <text>L-seryl-[protein] + ATP = 3-O-(5'-adenylyl)-L-seryl-[protein] + diphosphate</text>
        <dbReference type="Rhea" id="RHEA:58120"/>
        <dbReference type="Rhea" id="RHEA-COMP:9863"/>
        <dbReference type="Rhea" id="RHEA-COMP:15073"/>
        <dbReference type="ChEBI" id="CHEBI:29999"/>
        <dbReference type="ChEBI" id="CHEBI:30616"/>
        <dbReference type="ChEBI" id="CHEBI:33019"/>
        <dbReference type="ChEBI" id="CHEBI:142516"/>
        <dbReference type="EC" id="2.7.7.108"/>
    </reaction>
</comment>
<comment type="catalytic activity">
    <reaction evidence="1">
        <text>L-threonyl-[protein] + ATP = 3-O-(5'-adenylyl)-L-threonyl-[protein] + diphosphate</text>
        <dbReference type="Rhea" id="RHEA:54292"/>
        <dbReference type="Rhea" id="RHEA-COMP:11060"/>
        <dbReference type="Rhea" id="RHEA-COMP:13847"/>
        <dbReference type="ChEBI" id="CHEBI:30013"/>
        <dbReference type="ChEBI" id="CHEBI:30616"/>
        <dbReference type="ChEBI" id="CHEBI:33019"/>
        <dbReference type="ChEBI" id="CHEBI:138113"/>
        <dbReference type="EC" id="2.7.7.108"/>
    </reaction>
</comment>
<comment type="catalytic activity">
    <reaction evidence="1">
        <text>L-tyrosyl-[protein] + ATP = O-(5'-adenylyl)-L-tyrosyl-[protein] + diphosphate</text>
        <dbReference type="Rhea" id="RHEA:54288"/>
        <dbReference type="Rhea" id="RHEA-COMP:10136"/>
        <dbReference type="Rhea" id="RHEA-COMP:13846"/>
        <dbReference type="ChEBI" id="CHEBI:30616"/>
        <dbReference type="ChEBI" id="CHEBI:33019"/>
        <dbReference type="ChEBI" id="CHEBI:46858"/>
        <dbReference type="ChEBI" id="CHEBI:83624"/>
        <dbReference type="EC" id="2.7.7.108"/>
    </reaction>
</comment>
<comment type="catalytic activity">
    <reaction evidence="1">
        <text>L-histidyl-[protein] + UTP = N(tele)-(5'-uridylyl)-L-histidyl-[protein] + diphosphate</text>
        <dbReference type="Rhea" id="RHEA:83891"/>
        <dbReference type="Rhea" id="RHEA-COMP:9745"/>
        <dbReference type="Rhea" id="RHEA-COMP:20239"/>
        <dbReference type="ChEBI" id="CHEBI:29979"/>
        <dbReference type="ChEBI" id="CHEBI:33019"/>
        <dbReference type="ChEBI" id="CHEBI:46398"/>
        <dbReference type="ChEBI" id="CHEBI:233474"/>
    </reaction>
</comment>
<comment type="catalytic activity">
    <reaction evidence="1">
        <text>L-seryl-[protein] + UTP = O-(5'-uridylyl)-L-seryl-[protein] + diphosphate</text>
        <dbReference type="Rhea" id="RHEA:64604"/>
        <dbReference type="Rhea" id="RHEA-COMP:9863"/>
        <dbReference type="Rhea" id="RHEA-COMP:16635"/>
        <dbReference type="ChEBI" id="CHEBI:29999"/>
        <dbReference type="ChEBI" id="CHEBI:33019"/>
        <dbReference type="ChEBI" id="CHEBI:46398"/>
        <dbReference type="ChEBI" id="CHEBI:156051"/>
    </reaction>
</comment>
<comment type="catalytic activity">
    <reaction evidence="1">
        <text>L-tyrosyl-[protein] + UTP = O-(5'-uridylyl)-L-tyrosyl-[protein] + diphosphate</text>
        <dbReference type="Rhea" id="RHEA:83887"/>
        <dbReference type="Rhea" id="RHEA-COMP:10136"/>
        <dbReference type="Rhea" id="RHEA-COMP:20238"/>
        <dbReference type="ChEBI" id="CHEBI:33019"/>
        <dbReference type="ChEBI" id="CHEBI:46398"/>
        <dbReference type="ChEBI" id="CHEBI:46858"/>
        <dbReference type="ChEBI" id="CHEBI:90602"/>
    </reaction>
</comment>
<comment type="cofactor">
    <cofactor evidence="1">
        <name>Mg(2+)</name>
        <dbReference type="ChEBI" id="CHEBI:18420"/>
    </cofactor>
    <cofactor evidence="1">
        <name>Mn(2+)</name>
        <dbReference type="ChEBI" id="CHEBI:29035"/>
    </cofactor>
</comment>
<comment type="similarity">
    <text evidence="1">Belongs to the SELO family.</text>
</comment>
<feature type="chain" id="PRO_1000132125" description="Protein nucleotidyltransferase YdiU">
    <location>
        <begin position="1"/>
        <end position="480"/>
    </location>
</feature>
<feature type="active site" description="Proton acceptor" evidence="1">
    <location>
        <position position="248"/>
    </location>
</feature>
<feature type="binding site" evidence="1">
    <location>
        <position position="86"/>
    </location>
    <ligand>
        <name>ATP</name>
        <dbReference type="ChEBI" id="CHEBI:30616"/>
    </ligand>
</feature>
<feature type="binding site" evidence="1">
    <location>
        <position position="88"/>
    </location>
    <ligand>
        <name>ATP</name>
        <dbReference type="ChEBI" id="CHEBI:30616"/>
    </ligand>
</feature>
<feature type="binding site" evidence="1">
    <location>
        <position position="89"/>
    </location>
    <ligand>
        <name>ATP</name>
        <dbReference type="ChEBI" id="CHEBI:30616"/>
    </ligand>
</feature>
<feature type="binding site" evidence="1">
    <location>
        <position position="109"/>
    </location>
    <ligand>
        <name>ATP</name>
        <dbReference type="ChEBI" id="CHEBI:30616"/>
    </ligand>
</feature>
<feature type="binding site" evidence="1">
    <location>
        <position position="121"/>
    </location>
    <ligand>
        <name>ATP</name>
        <dbReference type="ChEBI" id="CHEBI:30616"/>
    </ligand>
</feature>
<feature type="binding site" evidence="1">
    <location>
        <position position="122"/>
    </location>
    <ligand>
        <name>ATP</name>
        <dbReference type="ChEBI" id="CHEBI:30616"/>
    </ligand>
</feature>
<feature type="binding site" evidence="1">
    <location>
        <position position="172"/>
    </location>
    <ligand>
        <name>ATP</name>
        <dbReference type="ChEBI" id="CHEBI:30616"/>
    </ligand>
</feature>
<feature type="binding site" evidence="1">
    <location>
        <position position="179"/>
    </location>
    <ligand>
        <name>ATP</name>
        <dbReference type="ChEBI" id="CHEBI:30616"/>
    </ligand>
</feature>
<feature type="binding site" evidence="1">
    <location>
        <position position="249"/>
    </location>
    <ligand>
        <name>Mg(2+)</name>
        <dbReference type="ChEBI" id="CHEBI:18420"/>
    </ligand>
</feature>
<feature type="binding site" evidence="1">
    <location>
        <position position="258"/>
    </location>
    <ligand>
        <name>ATP</name>
        <dbReference type="ChEBI" id="CHEBI:30616"/>
    </ligand>
</feature>
<feature type="binding site" evidence="1">
    <location>
        <position position="258"/>
    </location>
    <ligand>
        <name>Mg(2+)</name>
        <dbReference type="ChEBI" id="CHEBI:18420"/>
    </ligand>
</feature>
<accession>B4TGI2</accession>
<dbReference type="EC" id="2.7.7.-" evidence="1"/>
<dbReference type="EC" id="2.7.7.108" evidence="1"/>
<dbReference type="EMBL" id="CP001120">
    <property type="protein sequence ID" value="ACF67570.1"/>
    <property type="molecule type" value="Genomic_DNA"/>
</dbReference>
<dbReference type="RefSeq" id="WP_000175680.1">
    <property type="nucleotide sequence ID" value="NC_011083.1"/>
</dbReference>
<dbReference type="SMR" id="B4TGI2"/>
<dbReference type="KEGG" id="seh:SeHA_C1474"/>
<dbReference type="HOGENOM" id="CLU_010245_4_0_6"/>
<dbReference type="Proteomes" id="UP000001866">
    <property type="component" value="Chromosome"/>
</dbReference>
<dbReference type="GO" id="GO:0070733">
    <property type="term" value="F:AMPylase activity"/>
    <property type="evidence" value="ECO:0007669"/>
    <property type="project" value="RHEA"/>
</dbReference>
<dbReference type="GO" id="GO:0005524">
    <property type="term" value="F:ATP binding"/>
    <property type="evidence" value="ECO:0007669"/>
    <property type="project" value="UniProtKB-UniRule"/>
</dbReference>
<dbReference type="GO" id="GO:0000287">
    <property type="term" value="F:magnesium ion binding"/>
    <property type="evidence" value="ECO:0007669"/>
    <property type="project" value="UniProtKB-UniRule"/>
</dbReference>
<dbReference type="HAMAP" id="MF_00692">
    <property type="entry name" value="YdiU_SelO"/>
    <property type="match status" value="1"/>
</dbReference>
<dbReference type="InterPro" id="IPR054838">
    <property type="entry name" value="adnlytase_SelO"/>
</dbReference>
<dbReference type="InterPro" id="IPR003846">
    <property type="entry name" value="SelO"/>
</dbReference>
<dbReference type="NCBIfam" id="NF040880">
    <property type="entry name" value="adnlytase_SelO"/>
    <property type="match status" value="1"/>
</dbReference>
<dbReference type="NCBIfam" id="NF000658">
    <property type="entry name" value="PRK00029.1"/>
    <property type="match status" value="1"/>
</dbReference>
<dbReference type="PANTHER" id="PTHR32057">
    <property type="entry name" value="PROTEIN ADENYLYLTRANSFERASE SELO, MITOCHONDRIAL"/>
    <property type="match status" value="1"/>
</dbReference>
<dbReference type="PANTHER" id="PTHR32057:SF14">
    <property type="entry name" value="PROTEIN ADENYLYLTRANSFERASE SELO, MITOCHONDRIAL"/>
    <property type="match status" value="1"/>
</dbReference>
<dbReference type="Pfam" id="PF02696">
    <property type="entry name" value="SelO"/>
    <property type="match status" value="1"/>
</dbReference>
<evidence type="ECO:0000255" key="1">
    <source>
        <dbReference type="HAMAP-Rule" id="MF_00692"/>
    </source>
</evidence>
<protein>
    <recommendedName>
        <fullName evidence="1">Protein nucleotidyltransferase YdiU</fullName>
        <ecNumber evidence="1">2.7.7.-</ecNumber>
    </recommendedName>
    <alternativeName>
        <fullName evidence="1">Protein adenylyltransferase YdiU</fullName>
        <ecNumber evidence="1">2.7.7.108</ecNumber>
    </alternativeName>
    <alternativeName>
        <fullName evidence="1">Protein uridylyltransferase YdiU</fullName>
        <ecNumber evidence="1">2.7.7.-</ecNumber>
    </alternativeName>
</protein>
<keyword id="KW-0067">ATP-binding</keyword>
<keyword id="KW-0460">Magnesium</keyword>
<keyword id="KW-0464">Manganese</keyword>
<keyword id="KW-0479">Metal-binding</keyword>
<keyword id="KW-0547">Nucleotide-binding</keyword>
<keyword id="KW-0548">Nucleotidyltransferase</keyword>
<keyword id="KW-0808">Transferase</keyword>
<organism>
    <name type="scientific">Salmonella heidelberg (strain SL476)</name>
    <dbReference type="NCBI Taxonomy" id="454169"/>
    <lineage>
        <taxon>Bacteria</taxon>
        <taxon>Pseudomonadati</taxon>
        <taxon>Pseudomonadota</taxon>
        <taxon>Gammaproteobacteria</taxon>
        <taxon>Enterobacterales</taxon>
        <taxon>Enterobacteriaceae</taxon>
        <taxon>Salmonella</taxon>
    </lineage>
</organism>
<name>SELO_SALHS</name>
<proteinExistence type="inferred from homology"/>
<reference key="1">
    <citation type="journal article" date="2011" name="J. Bacteriol.">
        <title>Comparative genomics of 28 Salmonella enterica isolates: evidence for CRISPR-mediated adaptive sublineage evolution.</title>
        <authorList>
            <person name="Fricke W.F."/>
            <person name="Mammel M.K."/>
            <person name="McDermott P.F."/>
            <person name="Tartera C."/>
            <person name="White D.G."/>
            <person name="Leclerc J.E."/>
            <person name="Ravel J."/>
            <person name="Cebula T.A."/>
        </authorList>
    </citation>
    <scope>NUCLEOTIDE SEQUENCE [LARGE SCALE GENOMIC DNA]</scope>
    <source>
        <strain>SL476</strain>
    </source>
</reference>
<gene>
    <name evidence="1" type="primary">ydiU</name>
    <name evidence="1" type="synonym">selO</name>
    <name type="ordered locus">SeHA_C1474</name>
</gene>